<dbReference type="EMBL" id="M55975">
    <property type="protein sequence ID" value="AAA46804.1"/>
    <property type="molecule type" value="Genomic_RNA"/>
</dbReference>
<dbReference type="PIR" id="A43685">
    <property type="entry name" value="A43685"/>
</dbReference>
<dbReference type="SMR" id="P22044"/>
<dbReference type="IntAct" id="P22044">
    <property type="interactions" value="1"/>
</dbReference>
<dbReference type="DNASU" id="16488734"/>
<dbReference type="KEGG" id="vg:16488734"/>
<dbReference type="Gene3D" id="1.20.5.300">
    <property type="match status" value="1"/>
</dbReference>
<dbReference type="InterPro" id="IPR004897">
    <property type="entry name" value="P/V_Pprotein_paramyxoviral"/>
</dbReference>
<dbReference type="Pfam" id="PF03210">
    <property type="entry name" value="Paramyx_P_V_C"/>
    <property type="match status" value="1"/>
</dbReference>
<keyword id="KW-0175">Coiled coil</keyword>
<keyword id="KW-0597">Phosphoprotein</keyword>
<keyword id="KW-0691">RNA editing</keyword>
<keyword id="KW-0693">Viral RNA replication</keyword>
<gene>
    <name type="primary">P/V</name>
</gene>
<protein>
    <recommendedName>
        <fullName>Phosphoprotein</fullName>
        <shortName>Protein P</shortName>
    </recommendedName>
</protein>
<accession>P22044</accession>
<feature type="chain" id="PRO_0000142707" description="Phosphoprotein">
    <location>
        <begin position="1"/>
        <end position="399"/>
    </location>
</feature>
<feature type="region of interest" description="Disordered" evidence="5">
    <location>
        <begin position="30"/>
        <end position="112"/>
    </location>
</feature>
<feature type="region of interest" description="Multimerization" evidence="3">
    <location>
        <begin position="224"/>
        <end position="287"/>
    </location>
</feature>
<feature type="coiled-coil region" evidence="4">
    <location>
        <begin position="226"/>
        <end position="253"/>
    </location>
</feature>
<feature type="compositionally biased region" description="Polar residues" evidence="5">
    <location>
        <begin position="30"/>
        <end position="46"/>
    </location>
</feature>
<feature type="compositionally biased region" description="Polar residues" evidence="5">
    <location>
        <begin position="82"/>
        <end position="112"/>
    </location>
</feature>
<organism>
    <name type="scientific">Human parainfluenza 4a virus (strain Toshiba)</name>
    <name type="common">HPIV-4a</name>
    <dbReference type="NCBI Taxonomy" id="11225"/>
    <lineage>
        <taxon>Viruses</taxon>
        <taxon>Riboviria</taxon>
        <taxon>Orthornavirae</taxon>
        <taxon>Negarnaviricota</taxon>
        <taxon>Haploviricotina</taxon>
        <taxon>Monjiviricetes</taxon>
        <taxon>Mononegavirales</taxon>
        <taxon>Paramyxoviridae</taxon>
        <taxon>Rubulavirinae</taxon>
        <taxon>Orthorubulavirus</taxon>
        <taxon>Orthorubulavirus hominis</taxon>
        <taxon>Human orthorubulavirus 4</taxon>
    </lineage>
</organism>
<sequence length="399" mass="44068">MSFEISVEEIEELIETGNLNIDHALKELGATSQSSLNKPPSQSSRTEGNDGGTKISRNPAPVEAPAHTSTAQRSHNEENESGRQNLDSLSMISNKPQTGTLLMGSDTQLPSPSKTYQGLILDAKKRALNEPRRDQKITNEHGSMNDTRIFKRGGNIDTRKEAWVTQNQRSRTQPPLQDIEESTRFHGLTEEPQYPSGAIHAAHQSNQLPLSKNAHVEDVPKFANYASEILDAIKALEVRLDRIEGKVDKIMLTQNTIQQTKNDTQQIKGSLATIEGLITTMKIMDPGVPSKVSLRSLNKESEQVPIIVTGNGDVSKFVDQDNTITLDSLARPILSGTKQKTDERRAGVRIDALKITVSEMIRDLFGDCDKSKKLLESINMATTEQDINLIKTNALRSIT</sequence>
<comment type="function">
    <text evidence="2 3">Essential cofactor of the RNA polymerase L that plays a central role in the transcription and replication by forming the polymerase complex with RNA polymerase L and recruiting L to the genomic N-RNA template for RNA synthesis (By similarity). Also plays a central role in the encapsidation of nascent RNA chains by forming the encapsidation complex with the nucleocapsid protein N (N-P complex). Acts as a chaperone for newly synthesized free N protein, so-called N0, allowing encapsidation of nascent RNA chains during replication (By similarity). The nucleoprotein protein N prevents excessive phosphorylation of P, which leads to down-regulation of viral transcription/ replication. Participates, together with N, in the formation of viral factories (viroplasms), which are large inclusions in the host cytoplasm where replication takes place (By similarity).</text>
</comment>
<comment type="subunit">
    <text evidence="2 3">Homotetramer. Interacts (via multimerization domain) with polymerase L; this interaction forms the polymerase L-P complex (By similarity). Interacts (via N-terminus) with N0 (via Ncore); this interaction allows P to chaperon N0 to avoid N polymerization before encapsidation. Interacts (via C-terminus) with N-RNA template; this interaction positions the polymerase on the template for both transcription and replication (By similarity).</text>
</comment>
<comment type="domain">
    <text evidence="1 2 3">The N-terminus consists of a long intrinsically disordered tail. The central part contains the coiled-coil multimerization domain (PMD) (By similarity). Forms a four-stranded coiled coil structure (By similarity). The C-terminus constitutes the alpha-helical domain that binds to the nucleocapsid (N-RNA complex) (By similarity).</text>
</comment>
<comment type="RNA editing">
    <location>
        <position position="153" evidence="6"/>
    </location>
    <text>Partially edited. RNA editing at this position consists of an insertion of two guanine nucleotides. The sequence displayed here is the P protein, derived from the edited RNA. The unedited RNA version gives rise to the V protein (AC P21739).</text>
</comment>
<comment type="similarity">
    <text evidence="7">Belongs to the rubulavirus/avulavirus P protein family.</text>
</comment>
<reference key="1">
    <citation type="journal article" date="1990" name="Virology">
        <title>Sequence analysis of the phosphoprotein (P) genes of human parainfluenza type 4A and 4B viruses and RNA editing at transcript of the P genes: the number of G residues added is imprecise.</title>
        <authorList>
            <person name="Kondo K."/>
            <person name="Bando H."/>
            <person name="Tsurudome M."/>
            <person name="Kawano M."/>
            <person name="Nishio M."/>
            <person name="Ito Y."/>
        </authorList>
    </citation>
    <scope>NUCLEOTIDE SEQUENCE [GENOMIC RNA]</scope>
    <scope>RNA EDITING</scope>
</reference>
<evidence type="ECO:0000250" key="1">
    <source>
        <dbReference type="UniProtKB" id="P04859"/>
    </source>
</evidence>
<evidence type="ECO:0000250" key="2">
    <source>
        <dbReference type="UniProtKB" id="P06162"/>
    </source>
</evidence>
<evidence type="ECO:0000250" key="3">
    <source>
        <dbReference type="UniProtKB" id="Q77M42"/>
    </source>
</evidence>
<evidence type="ECO:0000255" key="4"/>
<evidence type="ECO:0000256" key="5">
    <source>
        <dbReference type="SAM" id="MobiDB-lite"/>
    </source>
</evidence>
<evidence type="ECO:0000269" key="6">
    <source>
    </source>
</evidence>
<evidence type="ECO:0000305" key="7"/>
<proteinExistence type="inferred from homology"/>
<organismHost>
    <name type="scientific">Homo sapiens</name>
    <name type="common">Human</name>
    <dbReference type="NCBI Taxonomy" id="9606"/>
</organismHost>
<name>PHOSP_PI4HA</name>